<keyword id="KW-0963">Cytoplasm</keyword>
<keyword id="KW-0448">Lipopolysaccharide biosynthesis</keyword>
<keyword id="KW-0548">Nucleotidyltransferase</keyword>
<keyword id="KW-0808">Transferase</keyword>
<proteinExistence type="inferred from homology"/>
<comment type="function">
    <text evidence="1">Activates KDO (a required 8-carbon sugar) for incorporation into bacterial lipopolysaccharide in Gram-negative bacteria.</text>
</comment>
<comment type="catalytic activity">
    <reaction evidence="1">
        <text>3-deoxy-alpha-D-manno-oct-2-ulosonate + CTP = CMP-3-deoxy-beta-D-manno-octulosonate + diphosphate</text>
        <dbReference type="Rhea" id="RHEA:23448"/>
        <dbReference type="ChEBI" id="CHEBI:33019"/>
        <dbReference type="ChEBI" id="CHEBI:37563"/>
        <dbReference type="ChEBI" id="CHEBI:85986"/>
        <dbReference type="ChEBI" id="CHEBI:85987"/>
        <dbReference type="EC" id="2.7.7.38"/>
    </reaction>
</comment>
<comment type="pathway">
    <text evidence="1">Nucleotide-sugar biosynthesis; CMP-3-deoxy-D-manno-octulosonate biosynthesis; CMP-3-deoxy-D-manno-octulosonate from 3-deoxy-D-manno-octulosonate and CTP: step 1/1.</text>
</comment>
<comment type="pathway">
    <text evidence="1">Bacterial outer membrane biogenesis; lipopolysaccharide biosynthesis.</text>
</comment>
<comment type="subcellular location">
    <subcellularLocation>
        <location evidence="1">Cytoplasm</location>
    </subcellularLocation>
</comment>
<comment type="similarity">
    <text evidence="1">Belongs to the KdsB family.</text>
</comment>
<name>KDSB_FRAP2</name>
<dbReference type="EC" id="2.7.7.38" evidence="1"/>
<dbReference type="EMBL" id="CP000937">
    <property type="protein sequence ID" value="ABZ88087.1"/>
    <property type="molecule type" value="Genomic_DNA"/>
</dbReference>
<dbReference type="SMR" id="B0U168"/>
<dbReference type="KEGG" id="fph:Fphi_1861"/>
<dbReference type="eggNOG" id="COG1212">
    <property type="taxonomic scope" value="Bacteria"/>
</dbReference>
<dbReference type="HOGENOM" id="CLU_065038_1_0_6"/>
<dbReference type="UniPathway" id="UPA00030"/>
<dbReference type="UniPathway" id="UPA00358">
    <property type="reaction ID" value="UER00476"/>
</dbReference>
<dbReference type="GO" id="GO:0005829">
    <property type="term" value="C:cytosol"/>
    <property type="evidence" value="ECO:0007669"/>
    <property type="project" value="TreeGrafter"/>
</dbReference>
<dbReference type="GO" id="GO:0008690">
    <property type="term" value="F:3-deoxy-manno-octulosonate cytidylyltransferase activity"/>
    <property type="evidence" value="ECO:0007669"/>
    <property type="project" value="UniProtKB-UniRule"/>
</dbReference>
<dbReference type="GO" id="GO:0033468">
    <property type="term" value="P:CMP-keto-3-deoxy-D-manno-octulosonic acid biosynthetic process"/>
    <property type="evidence" value="ECO:0007669"/>
    <property type="project" value="UniProtKB-UniRule"/>
</dbReference>
<dbReference type="GO" id="GO:0009103">
    <property type="term" value="P:lipopolysaccharide biosynthetic process"/>
    <property type="evidence" value="ECO:0007669"/>
    <property type="project" value="UniProtKB-UniRule"/>
</dbReference>
<dbReference type="CDD" id="cd02517">
    <property type="entry name" value="CMP-KDO-Synthetase"/>
    <property type="match status" value="1"/>
</dbReference>
<dbReference type="FunFam" id="3.90.550.10:FF:000011">
    <property type="entry name" value="3-deoxy-manno-octulosonate cytidylyltransferase"/>
    <property type="match status" value="1"/>
</dbReference>
<dbReference type="Gene3D" id="3.90.550.10">
    <property type="entry name" value="Spore Coat Polysaccharide Biosynthesis Protein SpsA, Chain A"/>
    <property type="match status" value="1"/>
</dbReference>
<dbReference type="HAMAP" id="MF_00057">
    <property type="entry name" value="KdsB"/>
    <property type="match status" value="1"/>
</dbReference>
<dbReference type="InterPro" id="IPR003329">
    <property type="entry name" value="Cytidylyl_trans"/>
</dbReference>
<dbReference type="InterPro" id="IPR004528">
    <property type="entry name" value="KdsB"/>
</dbReference>
<dbReference type="InterPro" id="IPR029044">
    <property type="entry name" value="Nucleotide-diphossugar_trans"/>
</dbReference>
<dbReference type="NCBIfam" id="TIGR00466">
    <property type="entry name" value="kdsB"/>
    <property type="match status" value="1"/>
</dbReference>
<dbReference type="NCBIfam" id="NF003950">
    <property type="entry name" value="PRK05450.1-3"/>
    <property type="match status" value="1"/>
</dbReference>
<dbReference type="NCBIfam" id="NF003952">
    <property type="entry name" value="PRK05450.1-5"/>
    <property type="match status" value="1"/>
</dbReference>
<dbReference type="NCBIfam" id="NF009905">
    <property type="entry name" value="PRK13368.1"/>
    <property type="match status" value="1"/>
</dbReference>
<dbReference type="PANTHER" id="PTHR42866">
    <property type="entry name" value="3-DEOXY-MANNO-OCTULOSONATE CYTIDYLYLTRANSFERASE"/>
    <property type="match status" value="1"/>
</dbReference>
<dbReference type="PANTHER" id="PTHR42866:SF2">
    <property type="entry name" value="3-DEOXY-MANNO-OCTULOSONATE CYTIDYLYLTRANSFERASE, MITOCHONDRIAL"/>
    <property type="match status" value="1"/>
</dbReference>
<dbReference type="Pfam" id="PF02348">
    <property type="entry name" value="CTP_transf_3"/>
    <property type="match status" value="1"/>
</dbReference>
<dbReference type="SUPFAM" id="SSF53448">
    <property type="entry name" value="Nucleotide-diphospho-sugar transferases"/>
    <property type="match status" value="1"/>
</dbReference>
<evidence type="ECO:0000255" key="1">
    <source>
        <dbReference type="HAMAP-Rule" id="MF_00057"/>
    </source>
</evidence>
<gene>
    <name evidence="1" type="primary">kdsB</name>
    <name type="ordered locus">Fphi_1861</name>
</gene>
<sequence>MVNIHVVIPARLKSTRLPGKMLADIAGKPMIQRVYEQVAKSKFKSIIIATDSQEIKEVAENFGAKVILTRDDHESGTDRIAEAVTKLGFADEDIVVNVQGDEPLIPVENIEQAAQLLIEKPEAVVSTLCERITEAEDIYNPNNVKVVFDKNNYALYFSRASIPFERGFSENHQVSISEFFRHIGIYTYRVGFLKHYAELAISPIEKYEALEQLRVLYNGYKIAIEQSAKPTPAGVDTLQDLEKVRKLFDV</sequence>
<organism>
    <name type="scientific">Francisella philomiragia subsp. philomiragia (strain ATCC 25017 / CCUG 19701 / FSC 153 / O#319-036)</name>
    <dbReference type="NCBI Taxonomy" id="484022"/>
    <lineage>
        <taxon>Bacteria</taxon>
        <taxon>Pseudomonadati</taxon>
        <taxon>Pseudomonadota</taxon>
        <taxon>Gammaproteobacteria</taxon>
        <taxon>Thiotrichales</taxon>
        <taxon>Francisellaceae</taxon>
        <taxon>Francisella</taxon>
    </lineage>
</organism>
<protein>
    <recommendedName>
        <fullName evidence="1">3-deoxy-manno-octulosonate cytidylyltransferase</fullName>
        <ecNumber evidence="1">2.7.7.38</ecNumber>
    </recommendedName>
    <alternativeName>
        <fullName evidence="1">CMP-2-keto-3-deoxyoctulosonic acid synthase</fullName>
        <shortName evidence="1">CKS</shortName>
        <shortName evidence="1">CMP-KDO synthase</shortName>
    </alternativeName>
</protein>
<accession>B0U168</accession>
<reference key="1">
    <citation type="submission" date="2007-12" db="EMBL/GenBank/DDBJ databases">
        <title>Complete sequence of chromosome of Francisella philomiragia subsp. philomiragia ATCC 25017.</title>
        <authorList>
            <consortium name="US DOE Joint Genome Institute"/>
            <person name="Copeland A."/>
            <person name="Lucas S."/>
            <person name="Lapidus A."/>
            <person name="Barry K."/>
            <person name="Detter J.C."/>
            <person name="Glavina del Rio T."/>
            <person name="Hammon N."/>
            <person name="Israni S."/>
            <person name="Dalin E."/>
            <person name="Tice H."/>
            <person name="Pitluck S."/>
            <person name="Chain P."/>
            <person name="Malfatti S."/>
            <person name="Shin M."/>
            <person name="Vergez L."/>
            <person name="Schmutz J."/>
            <person name="Larimer F."/>
            <person name="Land M."/>
            <person name="Hauser L."/>
            <person name="Richardson P."/>
        </authorList>
    </citation>
    <scope>NUCLEOTIDE SEQUENCE [LARGE SCALE GENOMIC DNA]</scope>
    <source>
        <strain>ATCC 25017 / CCUG 19701 / FSC 153 / O#319-036</strain>
    </source>
</reference>
<feature type="chain" id="PRO_0000370065" description="3-deoxy-manno-octulosonate cytidylyltransferase">
    <location>
        <begin position="1"/>
        <end position="250"/>
    </location>
</feature>